<evidence type="ECO:0000250" key="1">
    <source>
        <dbReference type="UniProtKB" id="P24941"/>
    </source>
</evidence>
<evidence type="ECO:0000255" key="2">
    <source>
        <dbReference type="PROSITE-ProRule" id="PRU00159"/>
    </source>
</evidence>
<evidence type="ECO:0000256" key="3">
    <source>
        <dbReference type="SAM" id="MobiDB-lite"/>
    </source>
</evidence>
<evidence type="ECO:0000269" key="4">
    <source>
    </source>
</evidence>
<evidence type="ECO:0000303" key="5">
    <source>
    </source>
</evidence>
<evidence type="ECO:0000305" key="6"/>
<evidence type="ECO:0000312" key="7">
    <source>
        <dbReference type="Proteomes" id="UP000001940"/>
    </source>
</evidence>
<evidence type="ECO:0000312" key="8">
    <source>
        <dbReference type="WormBase" id="ZC504.3"/>
    </source>
</evidence>
<organism evidence="7">
    <name type="scientific">Caenorhabditis elegans</name>
    <dbReference type="NCBI Taxonomy" id="6239"/>
    <lineage>
        <taxon>Eukaryota</taxon>
        <taxon>Metazoa</taxon>
        <taxon>Ecdysozoa</taxon>
        <taxon>Nematoda</taxon>
        <taxon>Chromadorea</taxon>
        <taxon>Rhabditida</taxon>
        <taxon>Rhabditina</taxon>
        <taxon>Rhabditomorpha</taxon>
        <taxon>Rhabditoidea</taxon>
        <taxon>Rhabditidae</taxon>
        <taxon>Peloderinae</taxon>
        <taxon>Caenorhabditis</taxon>
    </lineage>
</organism>
<feature type="chain" id="PRO_0000447606" description="Cyclin-dependent kinase 11.2">
    <location>
        <begin position="1"/>
        <end position="668"/>
    </location>
</feature>
<feature type="domain" description="Protein kinase" evidence="2">
    <location>
        <begin position="304"/>
        <end position="600"/>
    </location>
</feature>
<feature type="region of interest" description="Disordered" evidence="3">
    <location>
        <begin position="1"/>
        <end position="265"/>
    </location>
</feature>
<feature type="compositionally biased region" description="Basic and acidic residues" evidence="3">
    <location>
        <begin position="35"/>
        <end position="73"/>
    </location>
</feature>
<feature type="compositionally biased region" description="Basic and acidic residues" evidence="3">
    <location>
        <begin position="85"/>
        <end position="127"/>
    </location>
</feature>
<feature type="compositionally biased region" description="Basic and acidic residues" evidence="3">
    <location>
        <begin position="140"/>
        <end position="163"/>
    </location>
</feature>
<feature type="compositionally biased region" description="Acidic residues" evidence="3">
    <location>
        <begin position="164"/>
        <end position="181"/>
    </location>
</feature>
<feature type="compositionally biased region" description="Basic and acidic residues" evidence="3">
    <location>
        <begin position="197"/>
        <end position="212"/>
    </location>
</feature>
<feature type="compositionally biased region" description="Basic and acidic residues" evidence="3">
    <location>
        <begin position="245"/>
        <end position="265"/>
    </location>
</feature>
<feature type="active site" description="Proton acceptor" evidence="2">
    <location>
        <position position="432"/>
    </location>
</feature>
<feature type="binding site" evidence="2">
    <location>
        <begin position="310"/>
        <end position="318"/>
    </location>
    <ligand>
        <name>ATP</name>
        <dbReference type="ChEBI" id="CHEBI:30616"/>
    </ligand>
</feature>
<feature type="binding site" evidence="2">
    <location>
        <position position="333"/>
    </location>
    <ligand>
        <name>ATP</name>
        <dbReference type="ChEBI" id="CHEBI:30616"/>
    </ligand>
</feature>
<keyword id="KW-0067">ATP-binding</keyword>
<keyword id="KW-0963">Cytoplasm</keyword>
<keyword id="KW-0418">Kinase</keyword>
<keyword id="KW-0547">Nucleotide-binding</keyword>
<keyword id="KW-0539">Nucleus</keyword>
<keyword id="KW-1185">Reference proteome</keyword>
<keyword id="KW-0723">Serine/threonine-protein kinase</keyword>
<keyword id="KW-0808">Transferase</keyword>
<comment type="function">
    <text evidence="4">Probable cyclin-dependent kinase whose activity is most likely regulated by the cyclin cyl-1/Cylin-L (PubMed:29886128). Acts partially redundantly with cdk-11.1 to ensure embryonic viability (PubMed:29886128). In contrast to cdk-11.1, not essential for male and female fertility (PubMed:29886128).</text>
</comment>
<comment type="catalytic activity">
    <reaction evidence="1">
        <text>L-seryl-[protein] + ATP = O-phospho-L-seryl-[protein] + ADP + H(+)</text>
        <dbReference type="Rhea" id="RHEA:17989"/>
        <dbReference type="Rhea" id="RHEA-COMP:9863"/>
        <dbReference type="Rhea" id="RHEA-COMP:11604"/>
        <dbReference type="ChEBI" id="CHEBI:15378"/>
        <dbReference type="ChEBI" id="CHEBI:29999"/>
        <dbReference type="ChEBI" id="CHEBI:30616"/>
        <dbReference type="ChEBI" id="CHEBI:83421"/>
        <dbReference type="ChEBI" id="CHEBI:456216"/>
        <dbReference type="EC" id="2.7.11.22"/>
    </reaction>
</comment>
<comment type="catalytic activity">
    <reaction evidence="1">
        <text>L-threonyl-[protein] + ATP = O-phospho-L-threonyl-[protein] + ADP + H(+)</text>
        <dbReference type="Rhea" id="RHEA:46608"/>
        <dbReference type="Rhea" id="RHEA-COMP:11060"/>
        <dbReference type="Rhea" id="RHEA-COMP:11605"/>
        <dbReference type="ChEBI" id="CHEBI:15378"/>
        <dbReference type="ChEBI" id="CHEBI:30013"/>
        <dbReference type="ChEBI" id="CHEBI:30616"/>
        <dbReference type="ChEBI" id="CHEBI:61977"/>
        <dbReference type="ChEBI" id="CHEBI:456216"/>
        <dbReference type="EC" id="2.7.11.22"/>
    </reaction>
</comment>
<comment type="subcellular location">
    <subcellularLocation>
        <location evidence="4">Nucleus</location>
    </subcellularLocation>
    <subcellularLocation>
        <location evidence="4">Cytoplasm</location>
    </subcellularLocation>
    <text evidence="4">Evenly distributed between the cytoplasm and nucleus in embryos, but becomes more enriched in the nucleus from the 4- and 6-cell stage as embryos develop (PubMed:29886128). In the germline, localizes to the nucleus and cytoplasm in the mitotic region, but is enriched in the cytoplasm (PubMed:29886128). Nuclear localization increases as cells enter late pachytene, and then the distribution between the cytoplasm and nucleus becomes more even as oocytes mature (PubMed:29886128).</text>
</comment>
<comment type="tissue specificity">
    <text evidence="4">Expressed in somatic cells and at varying levels throughout the germline (at protein level) (PubMed:29886128). Highly expressed in the germ line of hermaphrodites (at protein level) (PubMed:29886128).</text>
</comment>
<comment type="developmental stage">
    <text evidence="4">Expression in embryos increases as development proceeds (at protein level).</text>
</comment>
<comment type="disruption phenotype">
    <text evidence="4">Viable, with no visible phenotype (PubMed:29886128). Knockout combined with RNAi-mediated knockdown of cdk-11.1 at the L1 stage of larval development results in sterility (PubMed:29886128). Knockout combined with RNAi-mediated knockdown of cdk-11.1 at the L4 larval stage results in fertile adults that produce few viable embryos (PubMed:29886128).</text>
</comment>
<comment type="similarity">
    <text evidence="6">Belongs to the protein kinase superfamily. CMGC Ser/Thr protein kinase family. CDC2/CDKX subfamily.</text>
</comment>
<accession>Q23357</accession>
<proteinExistence type="evidence at protein level"/>
<name>CD112_CAEEL</name>
<dbReference type="EC" id="2.7.11.22" evidence="1"/>
<dbReference type="EMBL" id="BX284606">
    <property type="protein sequence ID" value="CAA90342.2"/>
    <property type="molecule type" value="Genomic_DNA"/>
</dbReference>
<dbReference type="PIR" id="T27620">
    <property type="entry name" value="T27620"/>
</dbReference>
<dbReference type="RefSeq" id="NP_509746.2">
    <property type="nucleotide sequence ID" value="NM_077345.7"/>
</dbReference>
<dbReference type="SMR" id="Q23357"/>
<dbReference type="FunCoup" id="Q23357">
    <property type="interactions" value="2379"/>
</dbReference>
<dbReference type="STRING" id="6239.ZC504.3.1"/>
<dbReference type="PaxDb" id="6239-ZC504.3"/>
<dbReference type="PeptideAtlas" id="Q23357"/>
<dbReference type="EnsemblMetazoa" id="ZC504.3.1">
    <property type="protein sequence ID" value="ZC504.3.1"/>
    <property type="gene ID" value="WBGene00013917"/>
</dbReference>
<dbReference type="GeneID" id="181247"/>
<dbReference type="KEGG" id="cel:CELE_ZC504.3"/>
<dbReference type="UCSC" id="ZC504.3">
    <property type="organism name" value="c. elegans"/>
</dbReference>
<dbReference type="AGR" id="WB:WBGene00013917"/>
<dbReference type="CTD" id="181247"/>
<dbReference type="WormBase" id="ZC504.3">
    <property type="protein sequence ID" value="CE40176"/>
    <property type="gene ID" value="WBGene00013917"/>
    <property type="gene designation" value="cdk-11.2"/>
</dbReference>
<dbReference type="eggNOG" id="KOG0663">
    <property type="taxonomic scope" value="Eukaryota"/>
</dbReference>
<dbReference type="GeneTree" id="ENSGT00970000196694"/>
<dbReference type="HOGENOM" id="CLU_000288_91_3_1"/>
<dbReference type="InParanoid" id="Q23357"/>
<dbReference type="OMA" id="CIPVINF"/>
<dbReference type="OrthoDB" id="647at2759"/>
<dbReference type="PhylomeDB" id="Q23357"/>
<dbReference type="PRO" id="PR:Q23357"/>
<dbReference type="Proteomes" id="UP000001940">
    <property type="component" value="Chromosome X"/>
</dbReference>
<dbReference type="Bgee" id="WBGene00013917">
    <property type="expression patterns" value="Expressed in embryo and 4 other cell types or tissues"/>
</dbReference>
<dbReference type="GO" id="GO:0005737">
    <property type="term" value="C:cytoplasm"/>
    <property type="evidence" value="ECO:0000314"/>
    <property type="project" value="UniProtKB"/>
</dbReference>
<dbReference type="GO" id="GO:0005634">
    <property type="term" value="C:nucleus"/>
    <property type="evidence" value="ECO:0000314"/>
    <property type="project" value="UniProtKB"/>
</dbReference>
<dbReference type="GO" id="GO:0005524">
    <property type="term" value="F:ATP binding"/>
    <property type="evidence" value="ECO:0007669"/>
    <property type="project" value="UniProtKB-KW"/>
</dbReference>
<dbReference type="GO" id="GO:0004693">
    <property type="term" value="F:cyclin-dependent protein serine/threonine kinase activity"/>
    <property type="evidence" value="ECO:0007669"/>
    <property type="project" value="UniProtKB-EC"/>
</dbReference>
<dbReference type="GO" id="GO:0106310">
    <property type="term" value="F:protein serine kinase activity"/>
    <property type="evidence" value="ECO:0007669"/>
    <property type="project" value="RHEA"/>
</dbReference>
<dbReference type="GO" id="GO:0004674">
    <property type="term" value="F:protein serine/threonine kinase activity"/>
    <property type="evidence" value="ECO:0000318"/>
    <property type="project" value="GO_Central"/>
</dbReference>
<dbReference type="GO" id="GO:0040019">
    <property type="term" value="P:positive regulation of embryonic development"/>
    <property type="evidence" value="ECO:0000315"/>
    <property type="project" value="UniProtKB"/>
</dbReference>
<dbReference type="GO" id="GO:0051726">
    <property type="term" value="P:regulation of cell cycle"/>
    <property type="evidence" value="ECO:0000318"/>
    <property type="project" value="GO_Central"/>
</dbReference>
<dbReference type="FunFam" id="1.10.510.10:FF:000533">
    <property type="entry name" value="cyclin-dependent kinase 10"/>
    <property type="match status" value="1"/>
</dbReference>
<dbReference type="FunFam" id="3.30.200.20:FF:000054">
    <property type="entry name" value="Cyclin-dependent kinase 11B"/>
    <property type="match status" value="1"/>
</dbReference>
<dbReference type="Gene3D" id="3.30.200.20">
    <property type="entry name" value="Phosphorylase Kinase, domain 1"/>
    <property type="match status" value="1"/>
</dbReference>
<dbReference type="Gene3D" id="1.10.510.10">
    <property type="entry name" value="Transferase(Phosphotransferase) domain 1"/>
    <property type="match status" value="1"/>
</dbReference>
<dbReference type="InterPro" id="IPR050108">
    <property type="entry name" value="CDK"/>
</dbReference>
<dbReference type="InterPro" id="IPR011009">
    <property type="entry name" value="Kinase-like_dom_sf"/>
</dbReference>
<dbReference type="InterPro" id="IPR000719">
    <property type="entry name" value="Prot_kinase_dom"/>
</dbReference>
<dbReference type="InterPro" id="IPR008271">
    <property type="entry name" value="Ser/Thr_kinase_AS"/>
</dbReference>
<dbReference type="PANTHER" id="PTHR24056">
    <property type="entry name" value="CELL DIVISION PROTEIN KINASE"/>
    <property type="match status" value="1"/>
</dbReference>
<dbReference type="PANTHER" id="PTHR24056:SF166">
    <property type="entry name" value="CYCLIN-DEPENDENT KINASE 11.2"/>
    <property type="match status" value="1"/>
</dbReference>
<dbReference type="Pfam" id="PF00069">
    <property type="entry name" value="Pkinase"/>
    <property type="match status" value="1"/>
</dbReference>
<dbReference type="SMART" id="SM00220">
    <property type="entry name" value="S_TKc"/>
    <property type="match status" value="1"/>
</dbReference>
<dbReference type="SUPFAM" id="SSF56112">
    <property type="entry name" value="Protein kinase-like (PK-like)"/>
    <property type="match status" value="1"/>
</dbReference>
<dbReference type="PROSITE" id="PS50011">
    <property type="entry name" value="PROTEIN_KINASE_DOM"/>
    <property type="match status" value="1"/>
</dbReference>
<dbReference type="PROSITE" id="PS00108">
    <property type="entry name" value="PROTEIN_KINASE_ST"/>
    <property type="match status" value="1"/>
</dbReference>
<protein>
    <recommendedName>
        <fullName evidence="6">Cyclin-dependent kinase 11.2</fullName>
        <ecNumber evidence="1">2.7.11.22</ecNumber>
    </recommendedName>
</protein>
<gene>
    <name evidence="5 8" type="primary">cdk-11.2</name>
    <name evidence="8" type="ORF">ZC504.3</name>
</gene>
<sequence>MSNYSTNGSRKIRISNSDDDSRETRFSIQPRNSHKTKEERYRDKEKERDHERHHDRERRDDRYRKVDSRDHRDRNRRSPAGSRTYCRDEPDRRRNNHSDRNRRDRSSERDRDNRSSKSKTKSPDSLRSKSSRKSQTPNHLPDDGKLFDRILDPNYKKKEKTVMEVEDVEMSPVEMLDEEEVSTFTFDDACGPVRPSNEPEEKDYKSEGDPESRPATPKTPLTPDYLENTIVSLNETLSDDEDKGPDDKYGKTPDKEQWESMTENEQKLHRDAMKKRREQRHREAVSKLPVYYPGLRGCQHISEYVILNVIAEGTYGEVFRGKNTRTDEVVALKRFKMEKEKEGFPITALREINMLLKAGAHENIVNVKEILVGSTKTEVYMAMEYVEHDVKSLIDKMRSRNQRFKTGQQKTLMSQLLSGIEHMHKLWILHRDLKTSNLLISHSGILKIADFGLAREYGEARDIEKRMKLTPIVVTLWYRSPELLLEPKTYSTPVDMWSIGCIMAEFIMMKPMFQGDSEPNQVHQIFQMMGTPTEQIWPDIKELKVWNMVEFPPVKPGQLRRIFKGEKLVNETGFDLLNGMLCLNPANRLTASEALQHDWFSEHPKAVPPEDLPVYPAKSELNAAPPENRRKNRLEALLADEEPERAALLRQFNVKAEQLKPSGFQLRG</sequence>
<reference evidence="7" key="1">
    <citation type="journal article" date="1998" name="Science">
        <title>Genome sequence of the nematode C. elegans: a platform for investigating biology.</title>
        <authorList>
            <consortium name="The C. elegans sequencing consortium"/>
        </authorList>
    </citation>
    <scope>NUCLEOTIDE SEQUENCE [LARGE SCALE GENOMIC DNA]</scope>
    <source>
        <strain evidence="7">Bristol N2</strain>
    </source>
</reference>
<reference evidence="6" key="2">
    <citation type="journal article" date="2018" name="Dev. Biol.">
        <title>CDK-11-Cyclin L is required for gametogenesis and fertility in C. elegans.</title>
        <authorList>
            <person name="Williams C.W."/>
            <person name="Iyer J."/>
            <person name="Liu Y."/>
            <person name="O'Connell K.F."/>
        </authorList>
    </citation>
    <scope>FUNCTION</scope>
    <scope>SUBCELLULAR LOCATION</scope>
    <scope>TISSUE SPECIFICITY</scope>
    <scope>DEVELOPMENTAL STAGE</scope>
    <scope>DISRUPTION PHENOTYPE</scope>
</reference>